<reference key="1">
    <citation type="journal article" date="2004" name="Proc. Natl. Acad. Sci. U.S.A.">
        <title>Insights into the evolution of Yersinia pestis through whole-genome comparison with Yersinia pseudotuberculosis.</title>
        <authorList>
            <person name="Chain P.S.G."/>
            <person name="Carniel E."/>
            <person name="Larimer F.W."/>
            <person name="Lamerdin J."/>
            <person name="Stoutland P.O."/>
            <person name="Regala W.M."/>
            <person name="Georgescu A.M."/>
            <person name="Vergez L.M."/>
            <person name="Land M.L."/>
            <person name="Motin V.L."/>
            <person name="Brubaker R.R."/>
            <person name="Fowler J."/>
            <person name="Hinnebusch J."/>
            <person name="Marceau M."/>
            <person name="Medigue C."/>
            <person name="Simonet M."/>
            <person name="Chenal-Francisque V."/>
            <person name="Souza B."/>
            <person name="Dacheux D."/>
            <person name="Elliott J.M."/>
            <person name="Derbise A."/>
            <person name="Hauser L.J."/>
            <person name="Garcia E."/>
        </authorList>
    </citation>
    <scope>NUCLEOTIDE SEQUENCE [LARGE SCALE GENOMIC DNA]</scope>
    <source>
        <strain>IP32953</strain>
    </source>
</reference>
<organism>
    <name type="scientific">Yersinia pseudotuberculosis serotype I (strain IP32953)</name>
    <dbReference type="NCBI Taxonomy" id="273123"/>
    <lineage>
        <taxon>Bacteria</taxon>
        <taxon>Pseudomonadati</taxon>
        <taxon>Pseudomonadota</taxon>
        <taxon>Gammaproteobacteria</taxon>
        <taxon>Enterobacterales</taxon>
        <taxon>Yersiniaceae</taxon>
        <taxon>Yersinia</taxon>
    </lineage>
</organism>
<dbReference type="EMBL" id="BX936398">
    <property type="protein sequence ID" value="CAH19680.1"/>
    <property type="molecule type" value="Genomic_DNA"/>
</dbReference>
<dbReference type="RefSeq" id="WP_002210155.1">
    <property type="nucleotide sequence ID" value="NZ_CP009712.1"/>
</dbReference>
<dbReference type="SMR" id="Q66FA0"/>
<dbReference type="GeneID" id="98391335"/>
<dbReference type="KEGG" id="ypo:BZ17_2125"/>
<dbReference type="KEGG" id="yps:YPTB0440"/>
<dbReference type="PATRIC" id="fig|273123.14.peg.2252"/>
<dbReference type="Proteomes" id="UP000001011">
    <property type="component" value="Chromosome"/>
</dbReference>
<dbReference type="GO" id="GO:0022627">
    <property type="term" value="C:cytosolic small ribosomal subunit"/>
    <property type="evidence" value="ECO:0007669"/>
    <property type="project" value="TreeGrafter"/>
</dbReference>
<dbReference type="GO" id="GO:0070181">
    <property type="term" value="F:small ribosomal subunit rRNA binding"/>
    <property type="evidence" value="ECO:0007669"/>
    <property type="project" value="TreeGrafter"/>
</dbReference>
<dbReference type="GO" id="GO:0003735">
    <property type="term" value="F:structural constituent of ribosome"/>
    <property type="evidence" value="ECO:0007669"/>
    <property type="project" value="InterPro"/>
</dbReference>
<dbReference type="GO" id="GO:0006412">
    <property type="term" value="P:translation"/>
    <property type="evidence" value="ECO:0007669"/>
    <property type="project" value="UniProtKB-UniRule"/>
</dbReference>
<dbReference type="FunFam" id="4.10.640.10:FF:000001">
    <property type="entry name" value="30S ribosomal protein S18"/>
    <property type="match status" value="1"/>
</dbReference>
<dbReference type="Gene3D" id="4.10.640.10">
    <property type="entry name" value="Ribosomal protein S18"/>
    <property type="match status" value="1"/>
</dbReference>
<dbReference type="HAMAP" id="MF_00270">
    <property type="entry name" value="Ribosomal_bS18"/>
    <property type="match status" value="1"/>
</dbReference>
<dbReference type="InterPro" id="IPR001648">
    <property type="entry name" value="Ribosomal_bS18"/>
</dbReference>
<dbReference type="InterPro" id="IPR018275">
    <property type="entry name" value="Ribosomal_bS18_CS"/>
</dbReference>
<dbReference type="InterPro" id="IPR036870">
    <property type="entry name" value="Ribosomal_bS18_sf"/>
</dbReference>
<dbReference type="NCBIfam" id="TIGR00165">
    <property type="entry name" value="S18"/>
    <property type="match status" value="1"/>
</dbReference>
<dbReference type="PANTHER" id="PTHR13479">
    <property type="entry name" value="30S RIBOSOMAL PROTEIN S18"/>
    <property type="match status" value="1"/>
</dbReference>
<dbReference type="PANTHER" id="PTHR13479:SF40">
    <property type="entry name" value="SMALL RIBOSOMAL SUBUNIT PROTEIN BS18M"/>
    <property type="match status" value="1"/>
</dbReference>
<dbReference type="Pfam" id="PF01084">
    <property type="entry name" value="Ribosomal_S18"/>
    <property type="match status" value="1"/>
</dbReference>
<dbReference type="PRINTS" id="PR00974">
    <property type="entry name" value="RIBOSOMALS18"/>
</dbReference>
<dbReference type="SUPFAM" id="SSF46911">
    <property type="entry name" value="Ribosomal protein S18"/>
    <property type="match status" value="1"/>
</dbReference>
<dbReference type="PROSITE" id="PS00057">
    <property type="entry name" value="RIBOSOMAL_S18"/>
    <property type="match status" value="1"/>
</dbReference>
<name>RS18_YERPS</name>
<protein>
    <recommendedName>
        <fullName evidence="1">Small ribosomal subunit protein bS18</fullName>
    </recommendedName>
    <alternativeName>
        <fullName evidence="2">30S ribosomal protein S18</fullName>
    </alternativeName>
</protein>
<proteinExistence type="inferred from homology"/>
<accession>Q66FA0</accession>
<feature type="chain" id="PRO_0000111270" description="Small ribosomal subunit protein bS18">
    <location>
        <begin position="1"/>
        <end position="75"/>
    </location>
</feature>
<keyword id="KW-0687">Ribonucleoprotein</keyword>
<keyword id="KW-0689">Ribosomal protein</keyword>
<keyword id="KW-0694">RNA-binding</keyword>
<keyword id="KW-0699">rRNA-binding</keyword>
<comment type="function">
    <text evidence="1">Binds as a heterodimer with protein bS6 to the central domain of the 16S rRNA, where it helps stabilize the platform of the 30S subunit.</text>
</comment>
<comment type="subunit">
    <text evidence="1">Part of the 30S ribosomal subunit. Forms a tight heterodimer with protein bS6.</text>
</comment>
<comment type="similarity">
    <text evidence="1">Belongs to the bacterial ribosomal protein bS18 family.</text>
</comment>
<gene>
    <name evidence="1" type="primary">rpsR</name>
    <name type="ordered locus">YPTB0440</name>
</gene>
<evidence type="ECO:0000255" key="1">
    <source>
        <dbReference type="HAMAP-Rule" id="MF_00270"/>
    </source>
</evidence>
<evidence type="ECO:0000305" key="2"/>
<sequence>MARYFRRRKFCRFTAEGVVEIDYKDIATLKNYITESGKIVPSRITGTRAKYQRQLARCIKRARYLSLLPYTDRHQ</sequence>